<keyword id="KW-0535">Nitrogen fixation</keyword>
<proteinExistence type="inferred from homology"/>
<dbReference type="EMBL" id="X13303">
    <property type="protein sequence ID" value="CAA31678.1"/>
    <property type="molecule type" value="Genomic_DNA"/>
</dbReference>
<dbReference type="EMBL" id="M24106">
    <property type="protein sequence ID" value="AAA25104.1"/>
    <property type="molecule type" value="Genomic_DNA"/>
</dbReference>
<dbReference type="EMBL" id="X12600">
    <property type="protein sequence ID" value="CAA31121.1"/>
    <property type="molecule type" value="Genomic_DNA"/>
</dbReference>
<dbReference type="PIR" id="S02509">
    <property type="entry name" value="S02509"/>
</dbReference>
<dbReference type="GO" id="GO:0016163">
    <property type="term" value="F:nitrogenase activity"/>
    <property type="evidence" value="ECO:0000315"/>
    <property type="project" value="CACAO"/>
</dbReference>
<dbReference type="GO" id="GO:0009399">
    <property type="term" value="P:nitrogen fixation"/>
    <property type="evidence" value="ECO:0007669"/>
    <property type="project" value="UniProtKB-KW"/>
</dbReference>
<dbReference type="InterPro" id="IPR007415">
    <property type="entry name" value="Nitrogenase_MoFe_mat_NifZ"/>
</dbReference>
<dbReference type="Pfam" id="PF04319">
    <property type="entry name" value="NifZ"/>
    <property type="match status" value="1"/>
</dbReference>
<feature type="chain" id="PRO_0000096840" description="Protein NifZ">
    <location>
        <begin position="1"/>
        <end position="148"/>
    </location>
</feature>
<evidence type="ECO:0000305" key="1"/>
<accession>P0A3U2</accession>
<accession>P08533</accession>
<protein>
    <recommendedName>
        <fullName>Protein NifZ</fullName>
    </recommendedName>
</protein>
<comment type="similarity">
    <text evidence="1">Belongs to the NifZ family.</text>
</comment>
<name>NIFZ_KLEPN</name>
<organism>
    <name type="scientific">Klebsiella pneumoniae</name>
    <dbReference type="NCBI Taxonomy" id="573"/>
    <lineage>
        <taxon>Bacteria</taxon>
        <taxon>Pseudomonadati</taxon>
        <taxon>Pseudomonadota</taxon>
        <taxon>Gammaproteobacteria</taxon>
        <taxon>Enterobacterales</taxon>
        <taxon>Enterobacteriaceae</taxon>
        <taxon>Klebsiella/Raoultella group</taxon>
        <taxon>Klebsiella</taxon>
        <taxon>Klebsiella pneumoniae complex</taxon>
    </lineage>
</organism>
<reference key="1">
    <citation type="journal article" date="1988" name="J. Mol. Biol.">
        <title>Nucleotide sequence of a 24,206-base-pair DNA fragment carrying the entire nitrogen fixation gene cluster of Klebsiella pneumoniae.</title>
        <authorList>
            <person name="Arnold W."/>
            <person name="Rump A."/>
            <person name="Klipp W."/>
            <person name="Priefer U.B."/>
            <person name="Puehler A."/>
        </authorList>
    </citation>
    <scope>NUCLEOTIDE SEQUENCE [GENOMIC DNA]</scope>
</reference>
<reference key="2">
    <citation type="submission" date="1989-07" db="EMBL/GenBank/DDBJ databases">
        <authorList>
            <person name="Collet T.A."/>
            <person name="White T."/>
            <person name="Howard K."/>
            <person name="Orme-Johnson W.H."/>
        </authorList>
    </citation>
    <scope>NUCLEOTIDE SEQUENCE [GENOMIC DNA]</scope>
    <source>
        <strain>UN</strain>
    </source>
</reference>
<reference key="3">
    <citation type="journal article" date="1988" name="Nucleic Acids Res.">
        <title>The nucleotide sequence of the nifT, nifY, nifX and nifW genes of K. pneumoniae.</title>
        <authorList>
            <person name="Beynon J."/>
            <person name="Cannon M."/>
            <person name="Banan-Wollaston V."/>
            <person name="Ally A."/>
            <person name="Sutterquist R."/>
            <person name="Cannon F."/>
        </authorList>
    </citation>
    <scope>NUCLEOTIDE SEQUENCE [GENOMIC DNA] OF 1-6</scope>
</reference>
<gene>
    <name type="primary">nifZ</name>
</gene>
<sequence>MRPKFTFSEEVRVVRAIRNDGTVAGFAPGALLVRRGSTGFVRDWGVFLQDQIIYQIHFPETDRIIGCREQELIPITQPWLAGNLQYRDSVTCQMALAVNGDVVVSAGQRGRVEATDRGELGDSYTVDFSGRWFRVPVQAIALIEEREE</sequence>